<proteinExistence type="inferred from homology"/>
<feature type="chain" id="PRO_0000427765" description="Siderophore exporter MmpL4">
    <location>
        <begin position="1"/>
        <end position="967"/>
    </location>
</feature>
<feature type="transmembrane region" description="Helical" evidence="2">
    <location>
        <begin position="26"/>
        <end position="46"/>
    </location>
</feature>
<feature type="transmembrane region" description="Helical" evidence="2">
    <location>
        <begin position="210"/>
        <end position="230"/>
    </location>
</feature>
<feature type="transmembrane region" description="Helical" evidence="2">
    <location>
        <begin position="242"/>
        <end position="262"/>
    </location>
</feature>
<feature type="transmembrane region" description="Helical" evidence="2">
    <location>
        <begin position="303"/>
        <end position="323"/>
    </location>
</feature>
<feature type="transmembrane region" description="Helical" evidence="2">
    <location>
        <begin position="333"/>
        <end position="353"/>
    </location>
</feature>
<feature type="transmembrane region" description="Helical" evidence="2">
    <location>
        <begin position="384"/>
        <end position="404"/>
    </location>
</feature>
<feature type="transmembrane region" description="Helical" evidence="2">
    <location>
        <begin position="769"/>
        <end position="789"/>
    </location>
</feature>
<feature type="transmembrane region" description="Helical" evidence="2">
    <location>
        <begin position="793"/>
        <end position="813"/>
    </location>
</feature>
<feature type="transmembrane region" description="Helical" evidence="2">
    <location>
        <begin position="821"/>
        <end position="841"/>
    </location>
</feature>
<feature type="transmembrane region" description="Helical" evidence="2">
    <location>
        <begin position="875"/>
        <end position="895"/>
    </location>
</feature>
<feature type="transmembrane region" description="Helical" evidence="2">
    <location>
        <begin position="913"/>
        <end position="934"/>
    </location>
</feature>
<feature type="region of interest" description="Disordered" evidence="3">
    <location>
        <begin position="943"/>
        <end position="967"/>
    </location>
</feature>
<comment type="function">
    <text evidence="1">Part of an export system, which is required for biosynthesis and secretion of siderophores.</text>
</comment>
<comment type="subunit">
    <text evidence="1">Interacts with MmpS4.</text>
</comment>
<comment type="subcellular location">
    <subcellularLocation>
        <location evidence="1">Cell inner membrane</location>
        <topology evidence="2">Multi-pass membrane protein</topology>
    </subcellularLocation>
</comment>
<comment type="similarity">
    <text evidence="4">Belongs to the resistance-nodulation-cell division (RND) (TC 2.A.6) family. MmpL subfamily.</text>
</comment>
<evidence type="ECO:0000250" key="1">
    <source>
        <dbReference type="UniProtKB" id="P9WJV3"/>
    </source>
</evidence>
<evidence type="ECO:0000255" key="2"/>
<evidence type="ECO:0000256" key="3">
    <source>
        <dbReference type="SAM" id="MobiDB-lite"/>
    </source>
</evidence>
<evidence type="ECO:0000305" key="4"/>
<gene>
    <name type="primary">mmpL4</name>
    <name type="ordered locus">MT0466</name>
</gene>
<organism>
    <name type="scientific">Mycobacterium tuberculosis (strain CDC 1551 / Oshkosh)</name>
    <dbReference type="NCBI Taxonomy" id="83331"/>
    <lineage>
        <taxon>Bacteria</taxon>
        <taxon>Bacillati</taxon>
        <taxon>Actinomycetota</taxon>
        <taxon>Actinomycetes</taxon>
        <taxon>Mycobacteriales</taxon>
        <taxon>Mycobacteriaceae</taxon>
        <taxon>Mycobacterium</taxon>
        <taxon>Mycobacterium tuberculosis complex</taxon>
    </lineage>
</organism>
<name>MMPL4_MYCTO</name>
<reference key="1">
    <citation type="journal article" date="2002" name="J. Bacteriol.">
        <title>Whole-genome comparison of Mycobacterium tuberculosis clinical and laboratory strains.</title>
        <authorList>
            <person name="Fleischmann R.D."/>
            <person name="Alland D."/>
            <person name="Eisen J.A."/>
            <person name="Carpenter L."/>
            <person name="White O."/>
            <person name="Peterson J.D."/>
            <person name="DeBoy R.T."/>
            <person name="Dodson R.J."/>
            <person name="Gwinn M.L."/>
            <person name="Haft D.H."/>
            <person name="Hickey E.K."/>
            <person name="Kolonay J.F."/>
            <person name="Nelson W.C."/>
            <person name="Umayam L.A."/>
            <person name="Ermolaeva M.D."/>
            <person name="Salzberg S.L."/>
            <person name="Delcher A."/>
            <person name="Utterback T.R."/>
            <person name="Weidman J.F."/>
            <person name="Khouri H.M."/>
            <person name="Gill J."/>
            <person name="Mikula A."/>
            <person name="Bishai W."/>
            <person name="Jacobs W.R. Jr."/>
            <person name="Venter J.C."/>
            <person name="Fraser C.M."/>
        </authorList>
    </citation>
    <scope>NUCLEOTIDE SEQUENCE [LARGE SCALE GENOMIC DNA]</scope>
    <source>
        <strain>CDC 1551 / Oshkosh</strain>
    </source>
</reference>
<sequence>MSTKFANDSNTNARPEKPFIARMIHAFAVPIILGWLAVCVVVTVFVPSLEAVGQERSVSLSPKDAPSFEAMGRIGMVFKEGDSDSFAMVIIEGNQPLGDAAHKYYDGLVAQLRADKKHVQSVQDLWGDPLTAAGVQSNDGKAAYVQLSLAGNQGTPLANESVEAVRSIVESTPAPPGIKAYVTGPSALAADMHHSGDRSMARITMVTVAVIFIMLLLVYRSIITVVLLLITVGVELTAARGVVAVLGHSGAIGLTTFAVSLLTSLAIAAGTDYGIFIIGRYQEARQAGEDKEAAYYTMYRGTAHVILGSGLTIAGATFCLSFARMPYFQTLGIPCAVGMLVAVAVALTLGPAVLHVGSRFGLFDPKRLLKVRGWRRVGTVVVRWPLPVLVATCAIALVGLLALPGYKTSYNDRDYLPDFIPANQGYAAADRHFSQARMKPEILMIESDHDMRNPADFLVLDKLAKGIFRVPGISRVQAITRPEGTTMDHTSIPFQISMQNAGQLQTIKYQRDRANDMLKQADEMATTIAVLTRMHSLMAEMASTTHRMVGDTEEMKEITEELRDHVADFDDFWRPIRSYFYWEKHCYGIPICWSFRSIFDALDGIDKLSEQIGVLLGDLREMDRLMPQMVAQIPPQIEAMENMRTMILTMHSTMTGIFDQMLEMSDNATAMGKAFDAAKNDDSFYLPPEVFKNKDFQRAMKSFLSSDGHAARFIILHRGDPQSPEGIKSIDAIRTAAEESLKGTPLEDAKIYLAGTAAVFHDISEGAQWDLLIAAISSLCLIFIIMLIITRAFIAAAVIVGTVALSLGASFGLSVLLWQHILAIHLHWLVLAMSVIVLLAVGSDYNLLLVSRFKQEIGAGLKTGIIRSMGGTGKVVTNAGLVFAVTMASMAVSDLRVIGQVGTTIGLGLLFDTLIVRSFMTPSIAALLGRWFWWPLRVRSRPARTPTVPSETQPAGRPLAMSSDRLG</sequence>
<dbReference type="EMBL" id="AE000516">
    <property type="protein sequence ID" value="AAK44689.2"/>
    <property type="molecule type" value="Genomic_DNA"/>
</dbReference>
<dbReference type="PIR" id="C70831">
    <property type="entry name" value="C70831"/>
</dbReference>
<dbReference type="RefSeq" id="WP_003898458.1">
    <property type="nucleotide sequence ID" value="NZ_KK341227.1"/>
</dbReference>
<dbReference type="RefSeq" id="WP_042507427.1">
    <property type="nucleotide sequence ID" value="NC_002755.2"/>
</dbReference>
<dbReference type="EMDB" id="EMD-51366"/>
<dbReference type="EMDB" id="EMD-51368"/>
<dbReference type="EMDB" id="EMD-51369"/>
<dbReference type="SMR" id="P9WJV2"/>
<dbReference type="KEGG" id="mtc:MT0466"/>
<dbReference type="PATRIC" id="fig|83331.31.peg.493"/>
<dbReference type="HOGENOM" id="CLU_005108_3_2_11"/>
<dbReference type="PHI-base" id="PHI:2740"/>
<dbReference type="Proteomes" id="UP000001020">
    <property type="component" value="Chromosome"/>
</dbReference>
<dbReference type="GO" id="GO:0005886">
    <property type="term" value="C:plasma membrane"/>
    <property type="evidence" value="ECO:0007669"/>
    <property type="project" value="UniProtKB-SubCell"/>
</dbReference>
<dbReference type="FunFam" id="1.20.1640.10:FF:000018">
    <property type="entry name" value="Transmembrane transport protein MmpL10"/>
    <property type="match status" value="1"/>
</dbReference>
<dbReference type="FunFam" id="1.20.1640.10:FF:000020">
    <property type="entry name" value="Transmembrane transport protein MmpL10"/>
    <property type="match status" value="1"/>
</dbReference>
<dbReference type="Gene3D" id="1.20.1640.10">
    <property type="entry name" value="Multidrug efflux transporter AcrB transmembrane domain"/>
    <property type="match status" value="2"/>
</dbReference>
<dbReference type="InterPro" id="IPR004869">
    <property type="entry name" value="MMPL_dom"/>
</dbReference>
<dbReference type="InterPro" id="IPR004707">
    <property type="entry name" value="MmpL_fam"/>
</dbReference>
<dbReference type="InterPro" id="IPR050545">
    <property type="entry name" value="Mycobact_MmpL"/>
</dbReference>
<dbReference type="NCBIfam" id="TIGR00833">
    <property type="entry name" value="actII"/>
    <property type="match status" value="1"/>
</dbReference>
<dbReference type="PANTHER" id="PTHR33406">
    <property type="entry name" value="MEMBRANE PROTEIN MJ1562-RELATED"/>
    <property type="match status" value="1"/>
</dbReference>
<dbReference type="PANTHER" id="PTHR33406:SF6">
    <property type="entry name" value="MEMBRANE PROTEIN YDGH-RELATED"/>
    <property type="match status" value="1"/>
</dbReference>
<dbReference type="Pfam" id="PF03176">
    <property type="entry name" value="MMPL"/>
    <property type="match status" value="2"/>
</dbReference>
<dbReference type="SUPFAM" id="SSF82866">
    <property type="entry name" value="Multidrug efflux transporter AcrB transmembrane domain"/>
    <property type="match status" value="2"/>
</dbReference>
<keyword id="KW-0997">Cell inner membrane</keyword>
<keyword id="KW-1003">Cell membrane</keyword>
<keyword id="KW-0472">Membrane</keyword>
<keyword id="KW-1185">Reference proteome</keyword>
<keyword id="KW-0812">Transmembrane</keyword>
<keyword id="KW-1133">Transmembrane helix</keyword>
<keyword id="KW-0813">Transport</keyword>
<accession>P9WJV2</accession>
<accession>L0T3R9</accession>
<accession>O53735</accession>
<protein>
    <recommendedName>
        <fullName evidence="1">Siderophore exporter MmpL4</fullName>
    </recommendedName>
</protein>